<accession>Q8FJM6</accession>
<keyword id="KW-0223">Dioxygenase</keyword>
<keyword id="KW-0408">Iron</keyword>
<keyword id="KW-0479">Metal-binding</keyword>
<keyword id="KW-0560">Oxidoreductase</keyword>
<keyword id="KW-1185">Reference proteome</keyword>
<keyword id="KW-0847">Vitamin C</keyword>
<protein>
    <recommendedName>
        <fullName evidence="1">PKHD-type hydroxylase YbiX</fullName>
        <ecNumber evidence="1">1.14.11.-</ecNumber>
    </recommendedName>
</protein>
<evidence type="ECO:0000255" key="1">
    <source>
        <dbReference type="HAMAP-Rule" id="MF_00657"/>
    </source>
</evidence>
<evidence type="ECO:0000305" key="2"/>
<gene>
    <name evidence="1" type="primary">ybiX</name>
    <name type="ordered locus">c0889</name>
</gene>
<proteinExistence type="inferred from homology"/>
<sequence length="225" mass="25490">MMYHIPGVLSPQDVARFREHLEQAEWVDGRVTTGAQGAQVKNNQQVDTRSALYAALQNEVLNAVNQHALFFAAALPRTLSTPLFNRYQNNETYGFHVDGAVRSHPQNGWMRTDLSATLFLSDPESYDGGELVVNDTFGQHRVKLPAGDLVLYPSSSLHCVTPVTRGVRVASFMWIQSMIRDDKKRAMLFELDNNIQSLKSHYGESEEILSLLNLYHNLLREWSEI</sequence>
<organism>
    <name type="scientific">Escherichia coli O6:H1 (strain CFT073 / ATCC 700928 / UPEC)</name>
    <dbReference type="NCBI Taxonomy" id="199310"/>
    <lineage>
        <taxon>Bacteria</taxon>
        <taxon>Pseudomonadati</taxon>
        <taxon>Pseudomonadota</taxon>
        <taxon>Gammaproteobacteria</taxon>
        <taxon>Enterobacterales</taxon>
        <taxon>Enterobacteriaceae</taxon>
        <taxon>Escherichia</taxon>
    </lineage>
</organism>
<name>YBIX_ECOL6</name>
<comment type="cofactor">
    <cofactor evidence="1">
        <name>Fe(2+)</name>
        <dbReference type="ChEBI" id="CHEBI:29033"/>
    </cofactor>
    <text evidence="1">Binds 1 Fe(2+) ion per subunit.</text>
</comment>
<comment type="cofactor">
    <cofactor evidence="1">
        <name>L-ascorbate</name>
        <dbReference type="ChEBI" id="CHEBI:38290"/>
    </cofactor>
</comment>
<comment type="sequence caution" evidence="2">
    <conflict type="erroneous initiation">
        <sequence resource="EMBL-CDS" id="AAN79362"/>
    </conflict>
</comment>
<feature type="chain" id="PRO_0000206677" description="PKHD-type hydroxylase YbiX">
    <location>
        <begin position="1"/>
        <end position="225"/>
    </location>
</feature>
<feature type="domain" description="Fe2OG dioxygenase" evidence="1">
    <location>
        <begin position="78"/>
        <end position="177"/>
    </location>
</feature>
<feature type="binding site" evidence="1">
    <location>
        <position position="96"/>
    </location>
    <ligand>
        <name>Fe cation</name>
        <dbReference type="ChEBI" id="CHEBI:24875"/>
    </ligand>
</feature>
<feature type="binding site" evidence="1">
    <location>
        <position position="98"/>
    </location>
    <ligand>
        <name>Fe cation</name>
        <dbReference type="ChEBI" id="CHEBI:24875"/>
    </ligand>
</feature>
<feature type="binding site" evidence="1">
    <location>
        <position position="158"/>
    </location>
    <ligand>
        <name>Fe cation</name>
        <dbReference type="ChEBI" id="CHEBI:24875"/>
    </ligand>
</feature>
<feature type="binding site" evidence="1">
    <location>
        <position position="168"/>
    </location>
    <ligand>
        <name>2-oxoglutarate</name>
        <dbReference type="ChEBI" id="CHEBI:16810"/>
    </ligand>
</feature>
<dbReference type="EC" id="1.14.11.-" evidence="1"/>
<dbReference type="EMBL" id="AE014075">
    <property type="protein sequence ID" value="AAN79362.1"/>
    <property type="status" value="ALT_INIT"/>
    <property type="molecule type" value="Genomic_DNA"/>
</dbReference>
<dbReference type="RefSeq" id="WP_000990158.1">
    <property type="nucleotide sequence ID" value="NZ_CP051263.1"/>
</dbReference>
<dbReference type="SMR" id="Q8FJM6"/>
<dbReference type="STRING" id="199310.c0889"/>
<dbReference type="KEGG" id="ecc:c0889"/>
<dbReference type="eggNOG" id="COG3128">
    <property type="taxonomic scope" value="Bacteria"/>
</dbReference>
<dbReference type="HOGENOM" id="CLU_106663_0_0_6"/>
<dbReference type="Proteomes" id="UP000001410">
    <property type="component" value="Chromosome"/>
</dbReference>
<dbReference type="GO" id="GO:0016706">
    <property type="term" value="F:2-oxoglutarate-dependent dioxygenase activity"/>
    <property type="evidence" value="ECO:0007669"/>
    <property type="project" value="UniProtKB-UniRule"/>
</dbReference>
<dbReference type="GO" id="GO:0005506">
    <property type="term" value="F:iron ion binding"/>
    <property type="evidence" value="ECO:0007669"/>
    <property type="project" value="UniProtKB-UniRule"/>
</dbReference>
<dbReference type="GO" id="GO:0031418">
    <property type="term" value="F:L-ascorbic acid binding"/>
    <property type="evidence" value="ECO:0007669"/>
    <property type="project" value="UniProtKB-KW"/>
</dbReference>
<dbReference type="GO" id="GO:0006974">
    <property type="term" value="P:DNA damage response"/>
    <property type="evidence" value="ECO:0007669"/>
    <property type="project" value="TreeGrafter"/>
</dbReference>
<dbReference type="GO" id="GO:0006879">
    <property type="term" value="P:intracellular iron ion homeostasis"/>
    <property type="evidence" value="ECO:0007669"/>
    <property type="project" value="TreeGrafter"/>
</dbReference>
<dbReference type="FunFam" id="2.60.120.620:FF:000006">
    <property type="entry name" value="PKHD-type hydroxylase YbiX"/>
    <property type="match status" value="1"/>
</dbReference>
<dbReference type="FunFam" id="4.10.860.20:FF:000001">
    <property type="entry name" value="PKHD-type hydroxylase YbiX"/>
    <property type="match status" value="1"/>
</dbReference>
<dbReference type="Gene3D" id="2.60.120.620">
    <property type="entry name" value="q2cbj1_9rhob like domain"/>
    <property type="match status" value="1"/>
</dbReference>
<dbReference type="Gene3D" id="4.10.860.20">
    <property type="entry name" value="Rabenosyn, Rab binding domain"/>
    <property type="match status" value="1"/>
</dbReference>
<dbReference type="HAMAP" id="MF_00657">
    <property type="entry name" value="Hydroxyl_YbiX"/>
    <property type="match status" value="1"/>
</dbReference>
<dbReference type="InterPro" id="IPR005123">
    <property type="entry name" value="Oxoglu/Fe-dep_dioxygenase_dom"/>
</dbReference>
<dbReference type="InterPro" id="IPR041097">
    <property type="entry name" value="PKHD_C"/>
</dbReference>
<dbReference type="InterPro" id="IPR023550">
    <property type="entry name" value="PKHD_hydroxylase"/>
</dbReference>
<dbReference type="InterPro" id="IPR006620">
    <property type="entry name" value="Pro_4_hyd_alph"/>
</dbReference>
<dbReference type="InterPro" id="IPR044862">
    <property type="entry name" value="Pro_4_hyd_alph_FE2OG_OXY"/>
</dbReference>
<dbReference type="NCBIfam" id="NF003972">
    <property type="entry name" value="PRK05467.1-1"/>
    <property type="match status" value="1"/>
</dbReference>
<dbReference type="NCBIfam" id="NF003974">
    <property type="entry name" value="PRK05467.1-3"/>
    <property type="match status" value="1"/>
</dbReference>
<dbReference type="NCBIfam" id="NF003975">
    <property type="entry name" value="PRK05467.1-4"/>
    <property type="match status" value="1"/>
</dbReference>
<dbReference type="PANTHER" id="PTHR41536">
    <property type="entry name" value="PKHD-TYPE HYDROXYLASE YBIX"/>
    <property type="match status" value="1"/>
</dbReference>
<dbReference type="PANTHER" id="PTHR41536:SF1">
    <property type="entry name" value="PKHD-TYPE HYDROXYLASE YBIX"/>
    <property type="match status" value="1"/>
</dbReference>
<dbReference type="Pfam" id="PF13640">
    <property type="entry name" value="2OG-FeII_Oxy_3"/>
    <property type="match status" value="1"/>
</dbReference>
<dbReference type="Pfam" id="PF18331">
    <property type="entry name" value="PKHD_C"/>
    <property type="match status" value="1"/>
</dbReference>
<dbReference type="SMART" id="SM00702">
    <property type="entry name" value="P4Hc"/>
    <property type="match status" value="1"/>
</dbReference>
<dbReference type="SUPFAM" id="SSF51197">
    <property type="entry name" value="Clavaminate synthase-like"/>
    <property type="match status" value="1"/>
</dbReference>
<dbReference type="PROSITE" id="PS51471">
    <property type="entry name" value="FE2OG_OXY"/>
    <property type="match status" value="1"/>
</dbReference>
<reference key="1">
    <citation type="journal article" date="2002" name="Proc. Natl. Acad. Sci. U.S.A.">
        <title>Extensive mosaic structure revealed by the complete genome sequence of uropathogenic Escherichia coli.</title>
        <authorList>
            <person name="Welch R.A."/>
            <person name="Burland V."/>
            <person name="Plunkett G. III"/>
            <person name="Redford P."/>
            <person name="Roesch P."/>
            <person name="Rasko D."/>
            <person name="Buckles E.L."/>
            <person name="Liou S.-R."/>
            <person name="Boutin A."/>
            <person name="Hackett J."/>
            <person name="Stroud D."/>
            <person name="Mayhew G.F."/>
            <person name="Rose D.J."/>
            <person name="Zhou S."/>
            <person name="Schwartz D.C."/>
            <person name="Perna N.T."/>
            <person name="Mobley H.L.T."/>
            <person name="Donnenberg M.S."/>
            <person name="Blattner F.R."/>
        </authorList>
    </citation>
    <scope>NUCLEOTIDE SEQUENCE [LARGE SCALE GENOMIC DNA]</scope>
    <source>
        <strain>CFT073 / ATCC 700928 / UPEC</strain>
    </source>
</reference>